<proteinExistence type="inferred from homology"/>
<name>PSAF_CYACA</name>
<dbReference type="EMBL" id="AF022186">
    <property type="protein sequence ID" value="AAF12941.1"/>
    <property type="molecule type" value="Genomic_DNA"/>
</dbReference>
<dbReference type="RefSeq" id="NP_045152.1">
    <property type="nucleotide sequence ID" value="NC_001840.1"/>
</dbReference>
<dbReference type="EMDB" id="EMD-37480"/>
<dbReference type="SMR" id="Q9TLW6"/>
<dbReference type="GeneID" id="800116"/>
<dbReference type="GO" id="GO:0009535">
    <property type="term" value="C:chloroplast thylakoid membrane"/>
    <property type="evidence" value="ECO:0007669"/>
    <property type="project" value="UniProtKB-SubCell"/>
</dbReference>
<dbReference type="GO" id="GO:0009538">
    <property type="term" value="C:photosystem I reaction center"/>
    <property type="evidence" value="ECO:0007669"/>
    <property type="project" value="InterPro"/>
</dbReference>
<dbReference type="GO" id="GO:0015979">
    <property type="term" value="P:photosynthesis"/>
    <property type="evidence" value="ECO:0007669"/>
    <property type="project" value="UniProtKB-KW"/>
</dbReference>
<dbReference type="FunFam" id="1.10.8.110:FF:000001">
    <property type="entry name" value="Photosystem I reaction center subunit III"/>
    <property type="match status" value="1"/>
</dbReference>
<dbReference type="Gene3D" id="1.10.8.110">
    <property type="entry name" value="Photosystem I PsaF, reaction centre subunit III"/>
    <property type="match status" value="1"/>
</dbReference>
<dbReference type="InterPro" id="IPR003666">
    <property type="entry name" value="PSI_PsaF"/>
</dbReference>
<dbReference type="InterPro" id="IPR036577">
    <property type="entry name" value="PSI_PsaF_sf"/>
</dbReference>
<dbReference type="PANTHER" id="PTHR34939">
    <property type="entry name" value="PHOTOSYSTEM I REACTION CENTER SUBUNIT III, CHLOROPLASTIC"/>
    <property type="match status" value="1"/>
</dbReference>
<dbReference type="PANTHER" id="PTHR34939:SF1">
    <property type="entry name" value="PHOTOSYSTEM I REACTION CENTER SUBUNIT III, CHLOROPLASTIC"/>
    <property type="match status" value="1"/>
</dbReference>
<dbReference type="Pfam" id="PF02507">
    <property type="entry name" value="PSI_PsaF"/>
    <property type="match status" value="1"/>
</dbReference>
<dbReference type="SUPFAM" id="SSF81536">
    <property type="entry name" value="Subunit III of photosystem I reaction centre, PsaF"/>
    <property type="match status" value="1"/>
</dbReference>
<reference key="1">
    <citation type="journal article" date="2000" name="J. Mol. Evol.">
        <title>The structure and gene repertoire of an ancient red algal plastid genome.</title>
        <authorList>
            <person name="Gloeckner G."/>
            <person name="Rosenthal A."/>
            <person name="Valentin K.-U."/>
        </authorList>
    </citation>
    <scope>NUCLEOTIDE SEQUENCE [LARGE SCALE GENOMIC DNA]</scope>
    <source>
        <strain>RK-1</strain>
    </source>
</reference>
<feature type="signal peptide" evidence="1">
    <location>
        <begin position="1"/>
        <end position="28"/>
    </location>
</feature>
<feature type="chain" id="PRO_0000207752" description="Photosystem I reaction center subunit III">
    <location>
        <begin position="29"/>
        <end position="187"/>
    </location>
</feature>
<feature type="transmembrane region" description="Helical" evidence="1">
    <location>
        <begin position="107"/>
        <end position="127"/>
    </location>
</feature>
<organism>
    <name type="scientific">Cyanidium caldarium</name>
    <name type="common">Red alga</name>
    <dbReference type="NCBI Taxonomy" id="2771"/>
    <lineage>
        <taxon>Eukaryota</taxon>
        <taxon>Rhodophyta</taxon>
        <taxon>Bangiophyceae</taxon>
        <taxon>Cyanidiales</taxon>
        <taxon>Cyanidiaceae</taxon>
        <taxon>Cyanidium</taxon>
    </lineage>
</organism>
<accession>Q9TLW6</accession>
<sequence>MKSKVLQRFVLCITASLLFWNLNIATHASTLTPCENSAQFQARLNNNIKKLENKLTYYKQNSQEYTSIKQQIEKTKIRFDKYAKSSLLCGEDGLPHLITDGDWQHSGEFFIPSVLFIYIAGWIGWAGKGYLQYSKTLTKPNENEIIIDLPRALKYMFSGFAWPILALKEFKNGSLLASNDEITTSPR</sequence>
<geneLocation type="chloroplast"/>
<protein>
    <recommendedName>
        <fullName>Photosystem I reaction center subunit III</fullName>
    </recommendedName>
    <alternativeName>
        <fullName>PSI-F</fullName>
    </alternativeName>
</protein>
<comment type="function">
    <text>Probably participates in efficiency of electron transfer from plastocyanin to P700 (or cytochrome c553 in algae and cyanobacteria). This plastocyanin-docking protein contributes to the specific association of plastocyanin to PSI.</text>
</comment>
<comment type="subcellular location">
    <subcellularLocation>
        <location evidence="2">Plastid</location>
        <location evidence="2">Chloroplast thylakoid membrane</location>
        <topology evidence="2">Single-pass membrane protein</topology>
    </subcellularLocation>
</comment>
<comment type="similarity">
    <text evidence="2">Belongs to the PsaF family.</text>
</comment>
<gene>
    <name type="primary">psaF</name>
</gene>
<keyword id="KW-0150">Chloroplast</keyword>
<keyword id="KW-0472">Membrane</keyword>
<keyword id="KW-0602">Photosynthesis</keyword>
<keyword id="KW-0603">Photosystem I</keyword>
<keyword id="KW-0934">Plastid</keyword>
<keyword id="KW-0732">Signal</keyword>
<keyword id="KW-0793">Thylakoid</keyword>
<keyword id="KW-0812">Transmembrane</keyword>
<keyword id="KW-1133">Transmembrane helix</keyword>
<evidence type="ECO:0000255" key="1"/>
<evidence type="ECO:0000305" key="2"/>